<organism>
    <name type="scientific">Arabidopsis thaliana</name>
    <name type="common">Mouse-ear cress</name>
    <dbReference type="NCBI Taxonomy" id="3702"/>
    <lineage>
        <taxon>Eukaryota</taxon>
        <taxon>Viridiplantae</taxon>
        <taxon>Streptophyta</taxon>
        <taxon>Embryophyta</taxon>
        <taxon>Tracheophyta</taxon>
        <taxon>Spermatophyta</taxon>
        <taxon>Magnoliopsida</taxon>
        <taxon>eudicotyledons</taxon>
        <taxon>Gunneridae</taxon>
        <taxon>Pentapetalae</taxon>
        <taxon>rosids</taxon>
        <taxon>malvids</taxon>
        <taxon>Brassicales</taxon>
        <taxon>Brassicaceae</taxon>
        <taxon>Camelineae</taxon>
        <taxon>Arabidopsis</taxon>
    </lineage>
</organism>
<name>SYWM_ARATH</name>
<evidence type="ECO:0000250" key="1"/>
<evidence type="ECO:0000250" key="2">
    <source>
        <dbReference type="UniProtKB" id="Q9UGM6"/>
    </source>
</evidence>
<evidence type="ECO:0000269" key="3">
    <source>
    </source>
</evidence>
<evidence type="ECO:0000269" key="4">
    <source>
    </source>
</evidence>
<evidence type="ECO:0000303" key="5">
    <source>
    </source>
</evidence>
<evidence type="ECO:0000305" key="6"/>
<evidence type="ECO:0000312" key="7">
    <source>
        <dbReference type="Araport" id="AT2G25840"/>
    </source>
</evidence>
<evidence type="ECO:0007744" key="8">
    <source>
    </source>
</evidence>
<protein>
    <recommendedName>
        <fullName evidence="6">Tryptophan--tRNA ligase, chloroplastic/mitochondrial</fullName>
        <ecNumber evidence="6">6.1.1.2</ecNumber>
    </recommendedName>
    <alternativeName>
        <fullName evidence="5">Protein OVULE ABORTION 4</fullName>
    </alternativeName>
    <alternativeName>
        <fullName evidence="6">Tryptophanyl-tRNA synthetase</fullName>
        <shortName evidence="6">TrpRS</shortName>
    </alternativeName>
</protein>
<dbReference type="EC" id="6.1.1.2" evidence="6"/>
<dbReference type="EMBL" id="AC005395">
    <property type="protein sequence ID" value="AAC42246.1"/>
    <property type="status" value="ALT_SEQ"/>
    <property type="molecule type" value="Genomic_DNA"/>
</dbReference>
<dbReference type="EMBL" id="CP002685">
    <property type="protein sequence ID" value="AEC07758.1"/>
    <property type="molecule type" value="Genomic_DNA"/>
</dbReference>
<dbReference type="EMBL" id="AY081299">
    <property type="protein sequence ID" value="AAL91188.1"/>
    <property type="molecule type" value="mRNA"/>
</dbReference>
<dbReference type="EMBL" id="BT001221">
    <property type="protein sequence ID" value="AAN65108.1"/>
    <property type="molecule type" value="mRNA"/>
</dbReference>
<dbReference type="PIR" id="D84653">
    <property type="entry name" value="D84653"/>
</dbReference>
<dbReference type="RefSeq" id="NP_850070.1">
    <molecule id="Q8RXE9-1"/>
    <property type="nucleotide sequence ID" value="NM_179739.4"/>
</dbReference>
<dbReference type="SMR" id="Q8RXE9"/>
<dbReference type="FunCoup" id="Q8RXE9">
    <property type="interactions" value="2422"/>
</dbReference>
<dbReference type="STRING" id="3702.Q8RXE9"/>
<dbReference type="iPTMnet" id="Q8RXE9"/>
<dbReference type="PaxDb" id="3702-AT2G25840.2"/>
<dbReference type="ProteomicsDB" id="245297">
    <molecule id="Q8RXE9-1"/>
</dbReference>
<dbReference type="EnsemblPlants" id="AT2G25840.1">
    <molecule id="Q8RXE9-1"/>
    <property type="protein sequence ID" value="AT2G25840.1"/>
    <property type="gene ID" value="AT2G25840"/>
</dbReference>
<dbReference type="GeneID" id="817126"/>
<dbReference type="Gramene" id="AT2G25840.1">
    <molecule id="Q8RXE9-1"/>
    <property type="protein sequence ID" value="AT2G25840.1"/>
    <property type="gene ID" value="AT2G25840"/>
</dbReference>
<dbReference type="KEGG" id="ath:AT2G25840"/>
<dbReference type="Araport" id="AT2G25840"/>
<dbReference type="TAIR" id="AT2G25840">
    <property type="gene designation" value="OVA4"/>
</dbReference>
<dbReference type="eggNOG" id="KOG2713">
    <property type="taxonomic scope" value="Eukaryota"/>
</dbReference>
<dbReference type="InParanoid" id="Q8RXE9"/>
<dbReference type="OMA" id="GWGQFKP"/>
<dbReference type="PhylomeDB" id="Q8RXE9"/>
<dbReference type="PRO" id="PR:Q8RXE9"/>
<dbReference type="Proteomes" id="UP000006548">
    <property type="component" value="Chromosome 2"/>
</dbReference>
<dbReference type="ExpressionAtlas" id="Q8RXE9">
    <property type="expression patterns" value="baseline and differential"/>
</dbReference>
<dbReference type="GO" id="GO:0009507">
    <property type="term" value="C:chloroplast"/>
    <property type="evidence" value="ECO:0007669"/>
    <property type="project" value="UniProtKB-SubCell"/>
</dbReference>
<dbReference type="GO" id="GO:0005739">
    <property type="term" value="C:mitochondrion"/>
    <property type="evidence" value="ECO:0007669"/>
    <property type="project" value="UniProtKB-SubCell"/>
</dbReference>
<dbReference type="GO" id="GO:0005524">
    <property type="term" value="F:ATP binding"/>
    <property type="evidence" value="ECO:0007669"/>
    <property type="project" value="UniProtKB-KW"/>
</dbReference>
<dbReference type="GO" id="GO:0004830">
    <property type="term" value="F:tryptophan-tRNA ligase activity"/>
    <property type="evidence" value="ECO:0007669"/>
    <property type="project" value="UniProtKB-EC"/>
</dbReference>
<dbReference type="GO" id="GO:0009791">
    <property type="term" value="P:post-embryonic development"/>
    <property type="evidence" value="ECO:0007669"/>
    <property type="project" value="UniProtKB-ARBA"/>
</dbReference>
<dbReference type="GO" id="GO:0048608">
    <property type="term" value="P:reproductive structure development"/>
    <property type="evidence" value="ECO:0007669"/>
    <property type="project" value="UniProtKB-ARBA"/>
</dbReference>
<dbReference type="GO" id="GO:0006436">
    <property type="term" value="P:tryptophanyl-tRNA aminoacylation"/>
    <property type="evidence" value="ECO:0007669"/>
    <property type="project" value="InterPro"/>
</dbReference>
<dbReference type="CDD" id="cd00806">
    <property type="entry name" value="TrpRS_core"/>
    <property type="match status" value="1"/>
</dbReference>
<dbReference type="FunFam" id="1.10.240.10:FF:000002">
    <property type="entry name" value="Tryptophan--tRNA ligase"/>
    <property type="match status" value="1"/>
</dbReference>
<dbReference type="Gene3D" id="3.40.50.620">
    <property type="entry name" value="HUPs"/>
    <property type="match status" value="1"/>
</dbReference>
<dbReference type="Gene3D" id="1.10.240.10">
    <property type="entry name" value="Tyrosyl-Transfer RNA Synthetase"/>
    <property type="match status" value="1"/>
</dbReference>
<dbReference type="HAMAP" id="MF_00140_B">
    <property type="entry name" value="Trp_tRNA_synth_B"/>
    <property type="match status" value="1"/>
</dbReference>
<dbReference type="InterPro" id="IPR001412">
    <property type="entry name" value="aa-tRNA-synth_I_CS"/>
</dbReference>
<dbReference type="InterPro" id="IPR002305">
    <property type="entry name" value="aa-tRNA-synth_Ic"/>
</dbReference>
<dbReference type="InterPro" id="IPR014729">
    <property type="entry name" value="Rossmann-like_a/b/a_fold"/>
</dbReference>
<dbReference type="InterPro" id="IPR002306">
    <property type="entry name" value="Trp-tRNA-ligase"/>
</dbReference>
<dbReference type="InterPro" id="IPR024109">
    <property type="entry name" value="Trp-tRNA-ligase_bac-type"/>
</dbReference>
<dbReference type="InterPro" id="IPR050203">
    <property type="entry name" value="Trp-tRNA_synthetase"/>
</dbReference>
<dbReference type="NCBIfam" id="TIGR00233">
    <property type="entry name" value="trpS"/>
    <property type="match status" value="1"/>
</dbReference>
<dbReference type="PANTHER" id="PTHR43766">
    <property type="entry name" value="TRYPTOPHAN--TRNA LIGASE, MITOCHONDRIAL"/>
    <property type="match status" value="1"/>
</dbReference>
<dbReference type="PANTHER" id="PTHR43766:SF1">
    <property type="entry name" value="TRYPTOPHAN--TRNA LIGASE, MITOCHONDRIAL"/>
    <property type="match status" value="1"/>
</dbReference>
<dbReference type="Pfam" id="PF00579">
    <property type="entry name" value="tRNA-synt_1b"/>
    <property type="match status" value="1"/>
</dbReference>
<dbReference type="PRINTS" id="PR01039">
    <property type="entry name" value="TRNASYNTHTRP"/>
</dbReference>
<dbReference type="SUPFAM" id="SSF52374">
    <property type="entry name" value="Nucleotidylyl transferase"/>
    <property type="match status" value="1"/>
</dbReference>
<dbReference type="PROSITE" id="PS00178">
    <property type="entry name" value="AA_TRNA_LIGASE_I"/>
    <property type="match status" value="1"/>
</dbReference>
<reference key="1">
    <citation type="journal article" date="1999" name="Nature">
        <title>Sequence and analysis of chromosome 2 of the plant Arabidopsis thaliana.</title>
        <authorList>
            <person name="Lin X."/>
            <person name="Kaul S."/>
            <person name="Rounsley S.D."/>
            <person name="Shea T.P."/>
            <person name="Benito M.-I."/>
            <person name="Town C.D."/>
            <person name="Fujii C.Y."/>
            <person name="Mason T.M."/>
            <person name="Bowman C.L."/>
            <person name="Barnstead M.E."/>
            <person name="Feldblyum T.V."/>
            <person name="Buell C.R."/>
            <person name="Ketchum K.A."/>
            <person name="Lee J.J."/>
            <person name="Ronning C.M."/>
            <person name="Koo H.L."/>
            <person name="Moffat K.S."/>
            <person name="Cronin L.A."/>
            <person name="Shen M."/>
            <person name="Pai G."/>
            <person name="Van Aken S."/>
            <person name="Umayam L."/>
            <person name="Tallon L.J."/>
            <person name="Gill J.E."/>
            <person name="Adams M.D."/>
            <person name="Carrera A.J."/>
            <person name="Creasy T.H."/>
            <person name="Goodman H.M."/>
            <person name="Somerville C.R."/>
            <person name="Copenhaver G.P."/>
            <person name="Preuss D."/>
            <person name="Nierman W.C."/>
            <person name="White O."/>
            <person name="Eisen J.A."/>
            <person name="Salzberg S.L."/>
            <person name="Fraser C.M."/>
            <person name="Venter J.C."/>
        </authorList>
    </citation>
    <scope>NUCLEOTIDE SEQUENCE [LARGE SCALE GENOMIC DNA]</scope>
    <source>
        <strain>cv. Columbia</strain>
    </source>
</reference>
<reference key="2">
    <citation type="journal article" date="2017" name="Plant J.">
        <title>Araport11: a complete reannotation of the Arabidopsis thaliana reference genome.</title>
        <authorList>
            <person name="Cheng C.Y."/>
            <person name="Krishnakumar V."/>
            <person name="Chan A.P."/>
            <person name="Thibaud-Nissen F."/>
            <person name="Schobel S."/>
            <person name="Town C.D."/>
        </authorList>
    </citation>
    <scope>GENOME REANNOTATION</scope>
    <source>
        <strain>cv. Columbia</strain>
    </source>
</reference>
<reference key="3">
    <citation type="journal article" date="2003" name="Science">
        <title>Empirical analysis of transcriptional activity in the Arabidopsis genome.</title>
        <authorList>
            <person name="Yamada K."/>
            <person name="Lim J."/>
            <person name="Dale J.M."/>
            <person name="Chen H."/>
            <person name="Shinn P."/>
            <person name="Palm C.J."/>
            <person name="Southwick A.M."/>
            <person name="Wu H.C."/>
            <person name="Kim C.J."/>
            <person name="Nguyen M."/>
            <person name="Pham P.K."/>
            <person name="Cheuk R.F."/>
            <person name="Karlin-Newmann G."/>
            <person name="Liu S.X."/>
            <person name="Lam B."/>
            <person name="Sakano H."/>
            <person name="Wu T."/>
            <person name="Yu G."/>
            <person name="Miranda M."/>
            <person name="Quach H.L."/>
            <person name="Tripp M."/>
            <person name="Chang C.H."/>
            <person name="Lee J.M."/>
            <person name="Toriumi M.J."/>
            <person name="Chan M.M."/>
            <person name="Tang C.C."/>
            <person name="Onodera C.S."/>
            <person name="Deng J.M."/>
            <person name="Akiyama K."/>
            <person name="Ansari Y."/>
            <person name="Arakawa T."/>
            <person name="Banh J."/>
            <person name="Banno F."/>
            <person name="Bowser L."/>
            <person name="Brooks S.Y."/>
            <person name="Carninci P."/>
            <person name="Chao Q."/>
            <person name="Choy N."/>
            <person name="Enju A."/>
            <person name="Goldsmith A.D."/>
            <person name="Gurjal M."/>
            <person name="Hansen N.F."/>
            <person name="Hayashizaki Y."/>
            <person name="Johnson-Hopson C."/>
            <person name="Hsuan V.W."/>
            <person name="Iida K."/>
            <person name="Karnes M."/>
            <person name="Khan S."/>
            <person name="Koesema E."/>
            <person name="Ishida J."/>
            <person name="Jiang P.X."/>
            <person name="Jones T."/>
            <person name="Kawai J."/>
            <person name="Kamiya A."/>
            <person name="Meyers C."/>
            <person name="Nakajima M."/>
            <person name="Narusaka M."/>
            <person name="Seki M."/>
            <person name="Sakurai T."/>
            <person name="Satou M."/>
            <person name="Tamse R."/>
            <person name="Vaysberg M."/>
            <person name="Wallender E.K."/>
            <person name="Wong C."/>
            <person name="Yamamura Y."/>
            <person name="Yuan S."/>
            <person name="Shinozaki K."/>
            <person name="Davis R.W."/>
            <person name="Theologis A."/>
            <person name="Ecker J.R."/>
        </authorList>
    </citation>
    <scope>NUCLEOTIDE SEQUENCE [LARGE SCALE MRNA]</scope>
    <source>
        <strain>cv. Columbia</strain>
    </source>
</reference>
<reference key="4">
    <citation type="journal article" date="2005" name="Plant J.">
        <title>Requirement of aminoacyl-tRNA synthetases for gametogenesis and embryo development in Arabidopsis.</title>
        <authorList>
            <person name="Berg M."/>
            <person name="Rogers R."/>
            <person name="Muralla R."/>
            <person name="Meinke D."/>
        </authorList>
    </citation>
    <scope>DISRUPTION PHENOTYPE</scope>
</reference>
<reference key="5">
    <citation type="journal article" date="2005" name="Proc. Natl. Acad. Sci. U.S.A.">
        <title>Dual targeting is the rule for organellar aminoacyl-tRNA synthetases in Arabidopsis thaliana.</title>
        <authorList>
            <person name="Duchene A.-M."/>
            <person name="Giritch A."/>
            <person name="Hoffmann B."/>
            <person name="Cognat V."/>
            <person name="Lancelin D."/>
            <person name="Peeters N.M."/>
            <person name="Zaepfel M."/>
            <person name="Marechal-Drouard L."/>
            <person name="Small I.D."/>
        </authorList>
    </citation>
    <scope>SUBCELLULAR LOCATION</scope>
</reference>
<reference key="6">
    <citation type="journal article" date="2012" name="Mol. Cell. Proteomics">
        <title>Comparative large-scale characterisation of plant vs. mammal proteins reveals similar and idiosyncratic N-alpha acetylation features.</title>
        <authorList>
            <person name="Bienvenut W.V."/>
            <person name="Sumpton D."/>
            <person name="Martinez A."/>
            <person name="Lilla S."/>
            <person name="Espagne C."/>
            <person name="Meinnel T."/>
            <person name="Giglione C."/>
        </authorList>
    </citation>
    <scope>ACETYLATION [LARGE SCALE ANALYSIS] AT SER-53</scope>
    <scope>CLEAVAGE OF TRANSIT PEPTIDE [LARGE SCALE ANALYSIS] AFTER CYS-52</scope>
    <scope>IDENTIFICATION BY MASS SPECTROMETRY [LARGE SCALE ANALYSIS]</scope>
</reference>
<feature type="transit peptide" description="Chloroplast and mitochondrion" evidence="8">
    <location>
        <begin position="1"/>
        <end position="52"/>
    </location>
</feature>
<feature type="chain" id="PRO_0000433539" description="Tryptophan--tRNA ligase, chloroplastic/mitochondrial" evidence="6">
    <location>
        <begin position="53"/>
        <end position="408"/>
    </location>
</feature>
<feature type="short sequence motif" description="'HIGH' region" evidence="6">
    <location>
        <begin position="73"/>
        <end position="81"/>
    </location>
</feature>
<feature type="short sequence motif" description="'KMSKS' region" evidence="6">
    <location>
        <begin position="269"/>
        <end position="273"/>
    </location>
</feature>
<feature type="binding site" evidence="2">
    <location>
        <position position="72"/>
    </location>
    <ligand>
        <name>ATP</name>
        <dbReference type="ChEBI" id="CHEBI:30616"/>
    </ligand>
</feature>
<feature type="binding site" evidence="2">
    <location>
        <begin position="78"/>
        <end position="81"/>
    </location>
    <ligand>
        <name>ATP</name>
        <dbReference type="ChEBI" id="CHEBI:30616"/>
    </ligand>
</feature>
<feature type="binding site" evidence="2">
    <location>
        <position position="197"/>
    </location>
    <ligand>
        <name>L-tryptophan</name>
        <dbReference type="ChEBI" id="CHEBI:57912"/>
    </ligand>
</feature>
<feature type="binding site" evidence="2">
    <location>
        <begin position="209"/>
        <end position="211"/>
    </location>
    <ligand>
        <name>ATP</name>
        <dbReference type="ChEBI" id="CHEBI:30616"/>
    </ligand>
</feature>
<feature type="binding site" evidence="2">
    <location>
        <position position="260"/>
    </location>
    <ligand>
        <name>ATP</name>
        <dbReference type="ChEBI" id="CHEBI:30616"/>
    </ligand>
</feature>
<feature type="binding site" evidence="2">
    <location>
        <begin position="269"/>
        <end position="273"/>
    </location>
    <ligand>
        <name>ATP</name>
        <dbReference type="ChEBI" id="CHEBI:30616"/>
    </ligand>
</feature>
<feature type="binding site" evidence="1">
    <location>
        <position position="272"/>
    </location>
    <ligand>
        <name>ATP</name>
        <dbReference type="ChEBI" id="CHEBI:30616"/>
    </ligand>
</feature>
<feature type="modified residue" description="N-acetylserine" evidence="8">
    <location>
        <position position="53"/>
    </location>
</feature>
<gene>
    <name evidence="5" type="primary">OVA4</name>
    <name evidence="7" type="ordered locus">At2g25840</name>
</gene>
<proteinExistence type="evidence at protein level"/>
<keyword id="KW-0007">Acetylation</keyword>
<keyword id="KW-0025">Alternative splicing</keyword>
<keyword id="KW-0030">Aminoacyl-tRNA synthetase</keyword>
<keyword id="KW-0067">ATP-binding</keyword>
<keyword id="KW-0150">Chloroplast</keyword>
<keyword id="KW-0436">Ligase</keyword>
<keyword id="KW-0496">Mitochondrion</keyword>
<keyword id="KW-0547">Nucleotide-binding</keyword>
<keyword id="KW-0934">Plastid</keyword>
<keyword id="KW-0648">Protein biosynthesis</keyword>
<keyword id="KW-1185">Reference proteome</keyword>
<keyword id="KW-0809">Transit peptide</keyword>
<accession>Q8RXE9</accession>
<accession>O82313</accession>
<comment type="catalytic activity">
    <reaction evidence="6">
        <text>tRNA(Trp) + L-tryptophan + ATP = L-tryptophyl-tRNA(Trp) + AMP + diphosphate + H(+)</text>
        <dbReference type="Rhea" id="RHEA:24080"/>
        <dbReference type="Rhea" id="RHEA-COMP:9671"/>
        <dbReference type="Rhea" id="RHEA-COMP:9705"/>
        <dbReference type="ChEBI" id="CHEBI:15378"/>
        <dbReference type="ChEBI" id="CHEBI:30616"/>
        <dbReference type="ChEBI" id="CHEBI:33019"/>
        <dbReference type="ChEBI" id="CHEBI:57912"/>
        <dbReference type="ChEBI" id="CHEBI:78442"/>
        <dbReference type="ChEBI" id="CHEBI:78535"/>
        <dbReference type="ChEBI" id="CHEBI:456215"/>
        <dbReference type="EC" id="6.1.1.2"/>
    </reaction>
</comment>
<comment type="subcellular location">
    <subcellularLocation>
        <location evidence="3">Plastid</location>
        <location evidence="3">Chloroplast</location>
    </subcellularLocation>
    <subcellularLocation>
        <location evidence="3">Mitochondrion</location>
    </subcellularLocation>
</comment>
<comment type="alternative products">
    <event type="alternative splicing"/>
    <isoform>
        <id>Q8RXE9-1</id>
        <name>1</name>
        <sequence type="displayed"/>
    </isoform>
    <text evidence="6">A number of isoforms are produced. According to EST sequences.</text>
</comment>
<comment type="disruption phenotype">
    <text evidence="4">Lethal. In heterozygous plants, aborted ovules.</text>
</comment>
<comment type="similarity">
    <text evidence="6">Belongs to the class-I aminoacyl-tRNA synthetase family.</text>
</comment>
<comment type="sequence caution" evidence="6">
    <conflict type="erroneous gene model prediction">
        <sequence resource="EMBL-CDS" id="AAC42246"/>
    </conflict>
</comment>
<sequence>MGHATSLSHFLILSSSRFSRLGSLTRLLSKPTSLSGSFSSISVTGQGFRCCCSVATDDTSPSVKKRVVSGVQPTGSVHLGNYLGAIKNWVALQDTYETLFIIVDHHAITLPYDTRQLGKATTDTAALYLACGIDVSKASVFVQSHVPAHVELMWLLCSSTPIGWLQKMIQFKEKSRKEGVENASVGLFTYPDLMTADILLYQSDFVPVGEDQKQHIELAREIAQRVNHLYGGKKWKKLGGRGGSLFKIPEPLIPQAGARVMSLTDGLSKMSKSAPSDQSRINLLDSKDLIVDKIKRCKTDSFAGLEFDNAERPECNNLLSIYQIVSGKKKEEVMEECKDMSWGTFKPLLADALIEHLSPIQARYQEIIAEPEYLDKILSEGADRAEELGAVTMRNMYQAMGYYQRRRY</sequence>